<evidence type="ECO:0000255" key="1">
    <source>
        <dbReference type="HAMAP-Rule" id="MF_00019"/>
    </source>
</evidence>
<accession>B1I2E9</accession>
<sequence>MRIAVDVMGGDFAPQEIIRGAEAAVREWGFEVILVGNEEAIAKYADSRLCLPVVRAPQVVQMDESPVVAVKRKPDSSVVKAVELVKDGRADAAVSAGHTGATFAASLFRLGRIRGVERPALASVIPNEQGQTVLLDIGANVDCKPGHLLKFGIMGSLYARQVLGVPNPRVGLLSIGEEASKGNEQTLTVFPLFERAPFDFVGNVEGGDLFSGRVDVVVCDGFVGNIALKTGEGVVRTLEKAVKQEVATNWISKVCALPTVYTLRNIRKRFDYTEYGGAPLLGVNGVVVVSHGRSNAKAVKNAIRVAGEAVRTNLVGTIAGGIGDVRENGAETADG</sequence>
<reference key="1">
    <citation type="submission" date="2007-10" db="EMBL/GenBank/DDBJ databases">
        <title>Complete sequence of chromosome of Desulforudis audaxviator MP104C.</title>
        <authorList>
            <person name="Copeland A."/>
            <person name="Lucas S."/>
            <person name="Lapidus A."/>
            <person name="Barry K."/>
            <person name="Glavina del Rio T."/>
            <person name="Dalin E."/>
            <person name="Tice H."/>
            <person name="Bruce D."/>
            <person name="Pitluck S."/>
            <person name="Lowry S.R."/>
            <person name="Larimer F."/>
            <person name="Land M.L."/>
            <person name="Hauser L."/>
            <person name="Kyrpides N."/>
            <person name="Ivanova N.N."/>
            <person name="Richardson P."/>
        </authorList>
    </citation>
    <scope>NUCLEOTIDE SEQUENCE [LARGE SCALE GENOMIC DNA]</scope>
    <source>
        <strain>MP104C</strain>
    </source>
</reference>
<feature type="chain" id="PRO_1000089900" description="Phosphate acyltransferase">
    <location>
        <begin position="1"/>
        <end position="335"/>
    </location>
</feature>
<name>PLSX_DESAP</name>
<protein>
    <recommendedName>
        <fullName evidence="1">Phosphate acyltransferase</fullName>
        <ecNumber evidence="1">2.3.1.274</ecNumber>
    </recommendedName>
    <alternativeName>
        <fullName evidence="1">Acyl-ACP phosphotransacylase</fullName>
    </alternativeName>
    <alternativeName>
        <fullName evidence="1">Acyl-[acyl-carrier-protein]--phosphate acyltransferase</fullName>
    </alternativeName>
    <alternativeName>
        <fullName evidence="1">Phosphate-acyl-ACP acyltransferase</fullName>
    </alternativeName>
</protein>
<gene>
    <name evidence="1" type="primary">plsX</name>
    <name type="ordered locus">Daud_0638</name>
</gene>
<proteinExistence type="inferred from homology"/>
<comment type="function">
    <text evidence="1">Catalyzes the reversible formation of acyl-phosphate (acyl-PO(4)) from acyl-[acyl-carrier-protein] (acyl-ACP). This enzyme utilizes acyl-ACP as fatty acyl donor, but not acyl-CoA.</text>
</comment>
<comment type="catalytic activity">
    <reaction evidence="1">
        <text>a fatty acyl-[ACP] + phosphate = an acyl phosphate + holo-[ACP]</text>
        <dbReference type="Rhea" id="RHEA:42292"/>
        <dbReference type="Rhea" id="RHEA-COMP:9685"/>
        <dbReference type="Rhea" id="RHEA-COMP:14125"/>
        <dbReference type="ChEBI" id="CHEBI:43474"/>
        <dbReference type="ChEBI" id="CHEBI:59918"/>
        <dbReference type="ChEBI" id="CHEBI:64479"/>
        <dbReference type="ChEBI" id="CHEBI:138651"/>
        <dbReference type="EC" id="2.3.1.274"/>
    </reaction>
</comment>
<comment type="pathway">
    <text evidence="1">Lipid metabolism; phospholipid metabolism.</text>
</comment>
<comment type="subunit">
    <text evidence="1">Homodimer. Probably interacts with PlsY.</text>
</comment>
<comment type="subcellular location">
    <subcellularLocation>
        <location evidence="1">Cytoplasm</location>
    </subcellularLocation>
    <text evidence="1">Associated with the membrane possibly through PlsY.</text>
</comment>
<comment type="similarity">
    <text evidence="1">Belongs to the PlsX family.</text>
</comment>
<organism>
    <name type="scientific">Desulforudis audaxviator (strain MP104C)</name>
    <dbReference type="NCBI Taxonomy" id="477974"/>
    <lineage>
        <taxon>Bacteria</taxon>
        <taxon>Bacillati</taxon>
        <taxon>Bacillota</taxon>
        <taxon>Clostridia</taxon>
        <taxon>Thermoanaerobacterales</taxon>
        <taxon>Candidatus Desulforudaceae</taxon>
        <taxon>Candidatus Desulforudis</taxon>
    </lineage>
</organism>
<dbReference type="EC" id="2.3.1.274" evidence="1"/>
<dbReference type="EMBL" id="CP000860">
    <property type="protein sequence ID" value="ACA59172.1"/>
    <property type="molecule type" value="Genomic_DNA"/>
</dbReference>
<dbReference type="RefSeq" id="WP_012301760.1">
    <property type="nucleotide sequence ID" value="NC_010424.1"/>
</dbReference>
<dbReference type="SMR" id="B1I2E9"/>
<dbReference type="STRING" id="477974.Daud_0638"/>
<dbReference type="KEGG" id="dau:Daud_0638"/>
<dbReference type="eggNOG" id="COG0416">
    <property type="taxonomic scope" value="Bacteria"/>
</dbReference>
<dbReference type="HOGENOM" id="CLU_039379_1_1_9"/>
<dbReference type="OrthoDB" id="9806408at2"/>
<dbReference type="UniPathway" id="UPA00085"/>
<dbReference type="Proteomes" id="UP000008544">
    <property type="component" value="Chromosome"/>
</dbReference>
<dbReference type="GO" id="GO:0005737">
    <property type="term" value="C:cytoplasm"/>
    <property type="evidence" value="ECO:0007669"/>
    <property type="project" value="UniProtKB-SubCell"/>
</dbReference>
<dbReference type="GO" id="GO:0043811">
    <property type="term" value="F:phosphate:acyl-[acyl carrier protein] acyltransferase activity"/>
    <property type="evidence" value="ECO:0007669"/>
    <property type="project" value="UniProtKB-UniRule"/>
</dbReference>
<dbReference type="GO" id="GO:0006633">
    <property type="term" value="P:fatty acid biosynthetic process"/>
    <property type="evidence" value="ECO:0007669"/>
    <property type="project" value="UniProtKB-UniRule"/>
</dbReference>
<dbReference type="GO" id="GO:0008654">
    <property type="term" value="P:phospholipid biosynthetic process"/>
    <property type="evidence" value="ECO:0007669"/>
    <property type="project" value="UniProtKB-KW"/>
</dbReference>
<dbReference type="Gene3D" id="3.40.718.10">
    <property type="entry name" value="Isopropylmalate Dehydrogenase"/>
    <property type="match status" value="1"/>
</dbReference>
<dbReference type="HAMAP" id="MF_00019">
    <property type="entry name" value="PlsX"/>
    <property type="match status" value="1"/>
</dbReference>
<dbReference type="InterPro" id="IPR003664">
    <property type="entry name" value="FA_synthesis"/>
</dbReference>
<dbReference type="InterPro" id="IPR012281">
    <property type="entry name" value="Phospholipid_synth_PlsX-like"/>
</dbReference>
<dbReference type="NCBIfam" id="TIGR00182">
    <property type="entry name" value="plsX"/>
    <property type="match status" value="1"/>
</dbReference>
<dbReference type="PANTHER" id="PTHR30100">
    <property type="entry name" value="FATTY ACID/PHOSPHOLIPID SYNTHESIS PROTEIN PLSX"/>
    <property type="match status" value="1"/>
</dbReference>
<dbReference type="PANTHER" id="PTHR30100:SF1">
    <property type="entry name" value="PHOSPHATE ACYLTRANSFERASE"/>
    <property type="match status" value="1"/>
</dbReference>
<dbReference type="Pfam" id="PF02504">
    <property type="entry name" value="FA_synthesis"/>
    <property type="match status" value="1"/>
</dbReference>
<dbReference type="PIRSF" id="PIRSF002465">
    <property type="entry name" value="Phsphlp_syn_PlsX"/>
    <property type="match status" value="1"/>
</dbReference>
<dbReference type="SUPFAM" id="SSF53659">
    <property type="entry name" value="Isocitrate/Isopropylmalate dehydrogenase-like"/>
    <property type="match status" value="1"/>
</dbReference>
<keyword id="KW-0963">Cytoplasm</keyword>
<keyword id="KW-0444">Lipid biosynthesis</keyword>
<keyword id="KW-0443">Lipid metabolism</keyword>
<keyword id="KW-0594">Phospholipid biosynthesis</keyword>
<keyword id="KW-1208">Phospholipid metabolism</keyword>
<keyword id="KW-1185">Reference proteome</keyword>
<keyword id="KW-0808">Transferase</keyword>